<evidence type="ECO:0000255" key="1">
    <source>
        <dbReference type="HAMAP-Rule" id="MF_01609"/>
    </source>
</evidence>
<gene>
    <name type="primary">ybdK</name>
    <name type="ordered locus">ECIAI1_0562</name>
</gene>
<protein>
    <recommendedName>
        <fullName evidence="1">Putative glutamate--cysteine ligase 2</fullName>
        <ecNumber evidence="1">6.3.2.2</ecNumber>
    </recommendedName>
    <alternativeName>
        <fullName evidence="1">Gamma-glutamylcysteine synthetase 2</fullName>
        <shortName evidence="1">GCS 2</shortName>
        <shortName evidence="1">Gamma-GCS 2</shortName>
    </alternativeName>
</protein>
<keyword id="KW-0067">ATP-binding</keyword>
<keyword id="KW-0436">Ligase</keyword>
<keyword id="KW-0547">Nucleotide-binding</keyword>
<feature type="chain" id="PRO_1000189577" description="Putative glutamate--cysteine ligase 2">
    <location>
        <begin position="1"/>
        <end position="372"/>
    </location>
</feature>
<reference key="1">
    <citation type="journal article" date="2009" name="PLoS Genet.">
        <title>Organised genome dynamics in the Escherichia coli species results in highly diverse adaptive paths.</title>
        <authorList>
            <person name="Touchon M."/>
            <person name="Hoede C."/>
            <person name="Tenaillon O."/>
            <person name="Barbe V."/>
            <person name="Baeriswyl S."/>
            <person name="Bidet P."/>
            <person name="Bingen E."/>
            <person name="Bonacorsi S."/>
            <person name="Bouchier C."/>
            <person name="Bouvet O."/>
            <person name="Calteau A."/>
            <person name="Chiapello H."/>
            <person name="Clermont O."/>
            <person name="Cruveiller S."/>
            <person name="Danchin A."/>
            <person name="Diard M."/>
            <person name="Dossat C."/>
            <person name="Karoui M.E."/>
            <person name="Frapy E."/>
            <person name="Garry L."/>
            <person name="Ghigo J.M."/>
            <person name="Gilles A.M."/>
            <person name="Johnson J."/>
            <person name="Le Bouguenec C."/>
            <person name="Lescat M."/>
            <person name="Mangenot S."/>
            <person name="Martinez-Jehanne V."/>
            <person name="Matic I."/>
            <person name="Nassif X."/>
            <person name="Oztas S."/>
            <person name="Petit M.A."/>
            <person name="Pichon C."/>
            <person name="Rouy Z."/>
            <person name="Ruf C.S."/>
            <person name="Schneider D."/>
            <person name="Tourret J."/>
            <person name="Vacherie B."/>
            <person name="Vallenet D."/>
            <person name="Medigue C."/>
            <person name="Rocha E.P.C."/>
            <person name="Denamur E."/>
        </authorList>
    </citation>
    <scope>NUCLEOTIDE SEQUENCE [LARGE SCALE GENOMIC DNA]</scope>
    <source>
        <strain>IAI1</strain>
    </source>
</reference>
<dbReference type="EC" id="6.3.2.2" evidence="1"/>
<dbReference type="EMBL" id="CU928160">
    <property type="protein sequence ID" value="CAQ97433.1"/>
    <property type="molecule type" value="Genomic_DNA"/>
</dbReference>
<dbReference type="RefSeq" id="WP_001130618.1">
    <property type="nucleotide sequence ID" value="NC_011741.1"/>
</dbReference>
<dbReference type="SMR" id="B7M4R1"/>
<dbReference type="KEGG" id="ecr:ECIAI1_0562"/>
<dbReference type="HOGENOM" id="CLU_044848_1_1_6"/>
<dbReference type="GO" id="GO:0005524">
    <property type="term" value="F:ATP binding"/>
    <property type="evidence" value="ECO:0007669"/>
    <property type="project" value="UniProtKB-KW"/>
</dbReference>
<dbReference type="GO" id="GO:0004357">
    <property type="term" value="F:glutamate-cysteine ligase activity"/>
    <property type="evidence" value="ECO:0007669"/>
    <property type="project" value="UniProtKB-EC"/>
</dbReference>
<dbReference type="GO" id="GO:0042398">
    <property type="term" value="P:modified amino acid biosynthetic process"/>
    <property type="evidence" value="ECO:0007669"/>
    <property type="project" value="InterPro"/>
</dbReference>
<dbReference type="FunFam" id="3.30.590.20:FF:000002">
    <property type="entry name" value="Putative glutamate--cysteine ligase 2"/>
    <property type="match status" value="1"/>
</dbReference>
<dbReference type="Gene3D" id="3.30.590.20">
    <property type="match status" value="1"/>
</dbReference>
<dbReference type="HAMAP" id="MF_01609">
    <property type="entry name" value="Glu_cys_ligase_2"/>
    <property type="match status" value="1"/>
</dbReference>
<dbReference type="InterPro" id="IPR050141">
    <property type="entry name" value="GCL_type2/YbdK_subfam"/>
</dbReference>
<dbReference type="InterPro" id="IPR006336">
    <property type="entry name" value="GCS2"/>
</dbReference>
<dbReference type="InterPro" id="IPR014746">
    <property type="entry name" value="Gln_synth/guanido_kin_cat_dom"/>
</dbReference>
<dbReference type="InterPro" id="IPR011793">
    <property type="entry name" value="YbdK"/>
</dbReference>
<dbReference type="NCBIfam" id="TIGR02050">
    <property type="entry name" value="gshA_cyan_rel"/>
    <property type="match status" value="1"/>
</dbReference>
<dbReference type="NCBIfam" id="NF010040">
    <property type="entry name" value="PRK13516.1"/>
    <property type="match status" value="1"/>
</dbReference>
<dbReference type="PANTHER" id="PTHR36510">
    <property type="entry name" value="GLUTAMATE--CYSTEINE LIGASE 2-RELATED"/>
    <property type="match status" value="1"/>
</dbReference>
<dbReference type="PANTHER" id="PTHR36510:SF1">
    <property type="entry name" value="GLUTAMATE--CYSTEINE LIGASE 2-RELATED"/>
    <property type="match status" value="1"/>
</dbReference>
<dbReference type="Pfam" id="PF04107">
    <property type="entry name" value="GCS2"/>
    <property type="match status" value="1"/>
</dbReference>
<dbReference type="SUPFAM" id="SSF55931">
    <property type="entry name" value="Glutamine synthetase/guanido kinase"/>
    <property type="match status" value="1"/>
</dbReference>
<organism>
    <name type="scientific">Escherichia coli O8 (strain IAI1)</name>
    <dbReference type="NCBI Taxonomy" id="585034"/>
    <lineage>
        <taxon>Bacteria</taxon>
        <taxon>Pseudomonadati</taxon>
        <taxon>Pseudomonadota</taxon>
        <taxon>Gammaproteobacteria</taxon>
        <taxon>Enterobacterales</taxon>
        <taxon>Enterobacteriaceae</taxon>
        <taxon>Escherichia</taxon>
    </lineage>
</organism>
<proteinExistence type="inferred from homology"/>
<comment type="function">
    <text evidence="1">ATP-dependent carboxylate-amine ligase which exhibits weak glutamate--cysteine ligase activity.</text>
</comment>
<comment type="catalytic activity">
    <reaction evidence="1">
        <text>L-cysteine + L-glutamate + ATP = gamma-L-glutamyl-L-cysteine + ADP + phosphate + H(+)</text>
        <dbReference type="Rhea" id="RHEA:13285"/>
        <dbReference type="ChEBI" id="CHEBI:15378"/>
        <dbReference type="ChEBI" id="CHEBI:29985"/>
        <dbReference type="ChEBI" id="CHEBI:30616"/>
        <dbReference type="ChEBI" id="CHEBI:35235"/>
        <dbReference type="ChEBI" id="CHEBI:43474"/>
        <dbReference type="ChEBI" id="CHEBI:58173"/>
        <dbReference type="ChEBI" id="CHEBI:456216"/>
        <dbReference type="EC" id="6.3.2.2"/>
    </reaction>
</comment>
<comment type="subunit">
    <text evidence="1">Homodimer.</text>
</comment>
<comment type="similarity">
    <text evidence="1">Belongs to the glutamate--cysteine ligase type 2 family. YbdK subfamily.</text>
</comment>
<sequence>MPLPDFHVSEPFTLGIELEMQVVNPPGYDLSQDSSMLIDAVKNEITAGEVKHDITESMLELATDVCRDINQAAGQFSAMQKVVLQAAADHHLEICGGGTHPFQKWQRQEVCDNERYQRTLENFGYLIQQATVFGQHVHVGCASGDDAIYLLHGLSRFVPHFIALSAASPYMQGTDTRFASSRPNIFSAFPDNGPMPWVSNWQQFEALFRCLSYTTMIDSIKDLHWDIRPSPHFGTVEVRVMDTPLTLSHAVNMAGLIQATAHWLLTERPFKHQEKDYLLYKFNRFQACRYGLEGVITDPHTGDRRPLTEDTLRLLEKIAPSAHKMGASSAIEALHRQVVSGLNEAQLMRDFVADGGSLIGLVKKHCEIWAGD</sequence>
<accession>B7M4R1</accession>
<name>GCS2_ECO8A</name>